<comment type="catalytic activity">
    <reaction evidence="1">
        <text>L-methionyl-[protein] + [thioredoxin]-disulfide + H2O = L-methionyl-(R)-S-oxide-[protein] + [thioredoxin]-dithiol</text>
        <dbReference type="Rhea" id="RHEA:24164"/>
        <dbReference type="Rhea" id="RHEA-COMP:10698"/>
        <dbReference type="Rhea" id="RHEA-COMP:10700"/>
        <dbReference type="Rhea" id="RHEA-COMP:12313"/>
        <dbReference type="Rhea" id="RHEA-COMP:12314"/>
        <dbReference type="ChEBI" id="CHEBI:15377"/>
        <dbReference type="ChEBI" id="CHEBI:16044"/>
        <dbReference type="ChEBI" id="CHEBI:29950"/>
        <dbReference type="ChEBI" id="CHEBI:45764"/>
        <dbReference type="ChEBI" id="CHEBI:50058"/>
        <dbReference type="EC" id="1.8.4.12"/>
    </reaction>
</comment>
<comment type="cofactor">
    <cofactor evidence="1">
        <name>Zn(2+)</name>
        <dbReference type="ChEBI" id="CHEBI:29105"/>
    </cofactor>
    <text evidence="1">Binds 1 zinc ion per subunit. The zinc ion is important for the structural integrity of the protein.</text>
</comment>
<comment type="similarity">
    <text evidence="1">Belongs to the MsrB Met sulfoxide reductase family.</text>
</comment>
<name>MSRB_ACAM1</name>
<accession>B0BYW4</accession>
<proteinExistence type="inferred from homology"/>
<protein>
    <recommendedName>
        <fullName evidence="1">Peptide methionine sulfoxide reductase MsrB</fullName>
        <ecNumber evidence="1">1.8.4.12</ecNumber>
    </recommendedName>
    <alternativeName>
        <fullName evidence="1">Peptide-methionine (R)-S-oxide reductase</fullName>
    </alternativeName>
</protein>
<feature type="chain" id="PRO_1000145342" description="Peptide methionine sulfoxide reductase MsrB">
    <location>
        <begin position="1"/>
        <end position="131"/>
    </location>
</feature>
<feature type="domain" description="MsrB" evidence="2">
    <location>
        <begin position="8"/>
        <end position="130"/>
    </location>
</feature>
<feature type="active site" description="Nucleophile" evidence="2">
    <location>
        <position position="119"/>
    </location>
</feature>
<feature type="binding site" evidence="2">
    <location>
        <position position="47"/>
    </location>
    <ligand>
        <name>Zn(2+)</name>
        <dbReference type="ChEBI" id="CHEBI:29105"/>
    </ligand>
</feature>
<feature type="binding site" evidence="2">
    <location>
        <position position="50"/>
    </location>
    <ligand>
        <name>Zn(2+)</name>
        <dbReference type="ChEBI" id="CHEBI:29105"/>
    </ligand>
</feature>
<feature type="binding site" evidence="2">
    <location>
        <position position="96"/>
    </location>
    <ligand>
        <name>Zn(2+)</name>
        <dbReference type="ChEBI" id="CHEBI:29105"/>
    </ligand>
</feature>
<feature type="binding site" evidence="2">
    <location>
        <position position="99"/>
    </location>
    <ligand>
        <name>Zn(2+)</name>
        <dbReference type="ChEBI" id="CHEBI:29105"/>
    </ligand>
</feature>
<reference key="1">
    <citation type="journal article" date="2008" name="Proc. Natl. Acad. Sci. U.S.A.">
        <title>Niche adaptation and genome expansion in the chlorophyll d-producing cyanobacterium Acaryochloris marina.</title>
        <authorList>
            <person name="Swingley W.D."/>
            <person name="Chen M."/>
            <person name="Cheung P.C."/>
            <person name="Conrad A.L."/>
            <person name="Dejesa L.C."/>
            <person name="Hao J."/>
            <person name="Honchak B.M."/>
            <person name="Karbach L.E."/>
            <person name="Kurdoglu A."/>
            <person name="Lahiri S."/>
            <person name="Mastrian S.D."/>
            <person name="Miyashita H."/>
            <person name="Page L."/>
            <person name="Ramakrishna P."/>
            <person name="Satoh S."/>
            <person name="Sattley W.M."/>
            <person name="Shimada Y."/>
            <person name="Taylor H.L."/>
            <person name="Tomo T."/>
            <person name="Tsuchiya T."/>
            <person name="Wang Z.T."/>
            <person name="Raymond J."/>
            <person name="Mimuro M."/>
            <person name="Blankenship R.E."/>
            <person name="Touchman J.W."/>
        </authorList>
    </citation>
    <scope>NUCLEOTIDE SEQUENCE [LARGE SCALE GENOMIC DNA]</scope>
    <source>
        <strain>MBIC 11017</strain>
    </source>
</reference>
<sequence length="131" mass="14807">MEKVQKTEQEWEAQLTPEQFRVTRHHGTERAFTGEYHDLKAAGTYQCVCCGTELFTSDTKFDSGTGWPSFWAPADKTHVEEKTDRSLFMVRTEVLCAVCDAHLGHVFNDGPKPTGLRYCMNSAALKFVPKS</sequence>
<gene>
    <name evidence="1" type="primary">msrB</name>
    <name type="ordered locus">AM1_2115</name>
</gene>
<evidence type="ECO:0000255" key="1">
    <source>
        <dbReference type="HAMAP-Rule" id="MF_01400"/>
    </source>
</evidence>
<evidence type="ECO:0000255" key="2">
    <source>
        <dbReference type="PROSITE-ProRule" id="PRU01126"/>
    </source>
</evidence>
<organism>
    <name type="scientific">Acaryochloris marina (strain MBIC 11017)</name>
    <dbReference type="NCBI Taxonomy" id="329726"/>
    <lineage>
        <taxon>Bacteria</taxon>
        <taxon>Bacillati</taxon>
        <taxon>Cyanobacteriota</taxon>
        <taxon>Cyanophyceae</taxon>
        <taxon>Acaryochloridales</taxon>
        <taxon>Acaryochloridaceae</taxon>
        <taxon>Acaryochloris</taxon>
    </lineage>
</organism>
<dbReference type="EC" id="1.8.4.12" evidence="1"/>
<dbReference type="EMBL" id="CP000828">
    <property type="protein sequence ID" value="ABW27130.1"/>
    <property type="molecule type" value="Genomic_DNA"/>
</dbReference>
<dbReference type="RefSeq" id="WP_012162617.1">
    <property type="nucleotide sequence ID" value="NC_009925.1"/>
</dbReference>
<dbReference type="SMR" id="B0BYW4"/>
<dbReference type="STRING" id="329726.AM1_2115"/>
<dbReference type="KEGG" id="amr:AM1_2115"/>
<dbReference type="eggNOG" id="COG0229">
    <property type="taxonomic scope" value="Bacteria"/>
</dbReference>
<dbReference type="HOGENOM" id="CLU_031040_8_5_3"/>
<dbReference type="OrthoDB" id="4174719at2"/>
<dbReference type="Proteomes" id="UP000000268">
    <property type="component" value="Chromosome"/>
</dbReference>
<dbReference type="GO" id="GO:0005737">
    <property type="term" value="C:cytoplasm"/>
    <property type="evidence" value="ECO:0007669"/>
    <property type="project" value="TreeGrafter"/>
</dbReference>
<dbReference type="GO" id="GO:0033743">
    <property type="term" value="F:peptide-methionine (R)-S-oxide reductase activity"/>
    <property type="evidence" value="ECO:0007669"/>
    <property type="project" value="UniProtKB-UniRule"/>
</dbReference>
<dbReference type="GO" id="GO:0008270">
    <property type="term" value="F:zinc ion binding"/>
    <property type="evidence" value="ECO:0007669"/>
    <property type="project" value="UniProtKB-UniRule"/>
</dbReference>
<dbReference type="GO" id="GO:0030091">
    <property type="term" value="P:protein repair"/>
    <property type="evidence" value="ECO:0007669"/>
    <property type="project" value="InterPro"/>
</dbReference>
<dbReference type="GO" id="GO:0006979">
    <property type="term" value="P:response to oxidative stress"/>
    <property type="evidence" value="ECO:0007669"/>
    <property type="project" value="InterPro"/>
</dbReference>
<dbReference type="FunFam" id="2.170.150.20:FF:000001">
    <property type="entry name" value="Peptide methionine sulfoxide reductase MsrB"/>
    <property type="match status" value="1"/>
</dbReference>
<dbReference type="Gene3D" id="2.170.150.20">
    <property type="entry name" value="Peptide methionine sulfoxide reductase"/>
    <property type="match status" value="1"/>
</dbReference>
<dbReference type="HAMAP" id="MF_01400">
    <property type="entry name" value="MsrB"/>
    <property type="match status" value="1"/>
</dbReference>
<dbReference type="InterPro" id="IPR028427">
    <property type="entry name" value="Met_Sox_Rdtase_MsrB"/>
</dbReference>
<dbReference type="InterPro" id="IPR002579">
    <property type="entry name" value="Met_Sox_Rdtase_MsrB_dom"/>
</dbReference>
<dbReference type="InterPro" id="IPR011057">
    <property type="entry name" value="Mss4-like_sf"/>
</dbReference>
<dbReference type="NCBIfam" id="TIGR00357">
    <property type="entry name" value="peptide-methionine (R)-S-oxide reductase MsrB"/>
    <property type="match status" value="1"/>
</dbReference>
<dbReference type="PANTHER" id="PTHR10173">
    <property type="entry name" value="METHIONINE SULFOXIDE REDUCTASE"/>
    <property type="match status" value="1"/>
</dbReference>
<dbReference type="PANTHER" id="PTHR10173:SF52">
    <property type="entry name" value="METHIONINE-R-SULFOXIDE REDUCTASE B1"/>
    <property type="match status" value="1"/>
</dbReference>
<dbReference type="Pfam" id="PF01641">
    <property type="entry name" value="SelR"/>
    <property type="match status" value="1"/>
</dbReference>
<dbReference type="SUPFAM" id="SSF51316">
    <property type="entry name" value="Mss4-like"/>
    <property type="match status" value="1"/>
</dbReference>
<dbReference type="PROSITE" id="PS51790">
    <property type="entry name" value="MSRB"/>
    <property type="match status" value="1"/>
</dbReference>
<keyword id="KW-0479">Metal-binding</keyword>
<keyword id="KW-0560">Oxidoreductase</keyword>
<keyword id="KW-1185">Reference proteome</keyword>
<keyword id="KW-0862">Zinc</keyword>